<name>TIP11_ARATH</name>
<organism>
    <name type="scientific">Arabidopsis thaliana</name>
    <name type="common">Mouse-ear cress</name>
    <dbReference type="NCBI Taxonomy" id="3702"/>
    <lineage>
        <taxon>Eukaryota</taxon>
        <taxon>Viridiplantae</taxon>
        <taxon>Streptophyta</taxon>
        <taxon>Embryophyta</taxon>
        <taxon>Tracheophyta</taxon>
        <taxon>Spermatophyta</taxon>
        <taxon>Magnoliopsida</taxon>
        <taxon>eudicotyledons</taxon>
        <taxon>Gunneridae</taxon>
        <taxon>Pentapetalae</taxon>
        <taxon>rosids</taxon>
        <taxon>malvids</taxon>
        <taxon>Brassicales</taxon>
        <taxon>Brassicaceae</taxon>
        <taxon>Camelineae</taxon>
        <taxon>Arabidopsis</taxon>
    </lineage>
</organism>
<sequence>MPIRNIAIGRPDEATRPDALKAALAEFISTLIFVVAGSGSGMAFNKLTENGATTPSGLVAAAVAHAFGLFVAVSVGANISGGHVNPAVTFGAFIGGNITLLRGILYWIAQLLGSVVACLILKFATGGLAVPAFGLSAGVGVLNAFVFEIVMTFGLVYTVYATAIDPKNGSLGTIAPIAIGFIVGANILAGGAFSGASMNPAVAFGPAVVSWTWTNHWVYWAGPLVGGGIAGLIYEVFFINTTHEQLPTTDY</sequence>
<evidence type="ECO:0000250" key="1"/>
<evidence type="ECO:0000250" key="2">
    <source>
        <dbReference type="UniProtKB" id="P61837"/>
    </source>
</evidence>
<evidence type="ECO:0000255" key="3"/>
<evidence type="ECO:0000269" key="4">
    <source>
    </source>
</evidence>
<evidence type="ECO:0000269" key="5">
    <source>
    </source>
</evidence>
<evidence type="ECO:0000269" key="6">
    <source>
    </source>
</evidence>
<evidence type="ECO:0000269" key="7">
    <source>
    </source>
</evidence>
<evidence type="ECO:0000269" key="8">
    <source>
    </source>
</evidence>
<evidence type="ECO:0000269" key="9">
    <source>
    </source>
</evidence>
<evidence type="ECO:0000305" key="10"/>
<reference key="1">
    <citation type="journal article" date="1990" name="Nucleic Acids Res.">
        <title>Root-specific genes from tobacco and Arabidopsis homologous to an evolutionarily conserved gene family of membrane channel proteins.</title>
        <authorList>
            <person name="Yamamoto Y.T."/>
            <person name="Cheng C.-L."/>
            <person name="Conkling M.A."/>
        </authorList>
    </citation>
    <scope>NUCLEOTIDE SEQUENCE [MRNA]</scope>
    <source>
        <strain>cv. Columbia</strain>
        <tissue>Root</tissue>
    </source>
</reference>
<reference key="2">
    <citation type="journal article" date="1992" name="Plant Physiol.">
        <title>Vegetative and seed-specific forms of tonoplast intrinsic protein in the vacuolar membrane of Arabidopsis thaliana.</title>
        <authorList>
            <person name="Hoefte H.R."/>
            <person name="Hubbard L."/>
            <person name="Reizer J."/>
            <person name="Ludevid D."/>
            <person name="Kerman E.M."/>
            <person name="Chrispeels M.J."/>
        </authorList>
    </citation>
    <scope>NUCLEOTIDE SEQUENCE [GENOMIC DNA]</scope>
    <source>
        <strain>cv. Columbia</strain>
    </source>
</reference>
<reference key="3">
    <citation type="journal article" date="1994" name="Plant Mol. Biol.">
        <title>Cloning of two gibberellin-regulated cDNAs from Arabidopsis thaliana by subtractive hybridization: expression of the tonoplast water channel, gamma-TIP, is increased by GA3.</title>
        <authorList>
            <person name="Phillips A.L."/>
            <person name="Huttly A.K."/>
        </authorList>
    </citation>
    <scope>NUCLEOTIDE SEQUENCE [MRNA]</scope>
    <source>
        <strain>cv. Landsberg erecta</strain>
        <tissue>Flower bud</tissue>
    </source>
</reference>
<reference key="4">
    <citation type="journal article" date="1999" name="Nature">
        <title>Sequence and analysis of chromosome 2 of the plant Arabidopsis thaliana.</title>
        <authorList>
            <person name="Lin X."/>
            <person name="Kaul S."/>
            <person name="Rounsley S.D."/>
            <person name="Shea T.P."/>
            <person name="Benito M.-I."/>
            <person name="Town C.D."/>
            <person name="Fujii C.Y."/>
            <person name="Mason T.M."/>
            <person name="Bowman C.L."/>
            <person name="Barnstead M.E."/>
            <person name="Feldblyum T.V."/>
            <person name="Buell C.R."/>
            <person name="Ketchum K.A."/>
            <person name="Lee J.J."/>
            <person name="Ronning C.M."/>
            <person name="Koo H.L."/>
            <person name="Moffat K.S."/>
            <person name="Cronin L.A."/>
            <person name="Shen M."/>
            <person name="Pai G."/>
            <person name="Van Aken S."/>
            <person name="Umayam L."/>
            <person name="Tallon L.J."/>
            <person name="Gill J.E."/>
            <person name="Adams M.D."/>
            <person name="Carrera A.J."/>
            <person name="Creasy T.H."/>
            <person name="Goodman H.M."/>
            <person name="Somerville C.R."/>
            <person name="Copenhaver G.P."/>
            <person name="Preuss D."/>
            <person name="Nierman W.C."/>
            <person name="White O."/>
            <person name="Eisen J.A."/>
            <person name="Salzberg S.L."/>
            <person name="Fraser C.M."/>
            <person name="Venter J.C."/>
        </authorList>
    </citation>
    <scope>NUCLEOTIDE SEQUENCE [LARGE SCALE GENOMIC DNA]</scope>
    <source>
        <strain>cv. Columbia</strain>
    </source>
</reference>
<reference key="5">
    <citation type="journal article" date="2017" name="Plant J.">
        <title>Araport11: a complete reannotation of the Arabidopsis thaliana reference genome.</title>
        <authorList>
            <person name="Cheng C.Y."/>
            <person name="Krishnakumar V."/>
            <person name="Chan A.P."/>
            <person name="Thibaud-Nissen F."/>
            <person name="Schobel S."/>
            <person name="Town C.D."/>
        </authorList>
    </citation>
    <scope>GENOME REANNOTATION</scope>
    <source>
        <strain>cv. Columbia</strain>
    </source>
</reference>
<reference key="6">
    <citation type="journal article" date="2003" name="Science">
        <title>Empirical analysis of transcriptional activity in the Arabidopsis genome.</title>
        <authorList>
            <person name="Yamada K."/>
            <person name="Lim J."/>
            <person name="Dale J.M."/>
            <person name="Chen H."/>
            <person name="Shinn P."/>
            <person name="Palm C.J."/>
            <person name="Southwick A.M."/>
            <person name="Wu H.C."/>
            <person name="Kim C.J."/>
            <person name="Nguyen M."/>
            <person name="Pham P.K."/>
            <person name="Cheuk R.F."/>
            <person name="Karlin-Newmann G."/>
            <person name="Liu S.X."/>
            <person name="Lam B."/>
            <person name="Sakano H."/>
            <person name="Wu T."/>
            <person name="Yu G."/>
            <person name="Miranda M."/>
            <person name="Quach H.L."/>
            <person name="Tripp M."/>
            <person name="Chang C.H."/>
            <person name="Lee J.M."/>
            <person name="Toriumi M.J."/>
            <person name="Chan M.M."/>
            <person name="Tang C.C."/>
            <person name="Onodera C.S."/>
            <person name="Deng J.M."/>
            <person name="Akiyama K."/>
            <person name="Ansari Y."/>
            <person name="Arakawa T."/>
            <person name="Banh J."/>
            <person name="Banno F."/>
            <person name="Bowser L."/>
            <person name="Brooks S.Y."/>
            <person name="Carninci P."/>
            <person name="Chao Q."/>
            <person name="Choy N."/>
            <person name="Enju A."/>
            <person name="Goldsmith A.D."/>
            <person name="Gurjal M."/>
            <person name="Hansen N.F."/>
            <person name="Hayashizaki Y."/>
            <person name="Johnson-Hopson C."/>
            <person name="Hsuan V.W."/>
            <person name="Iida K."/>
            <person name="Karnes M."/>
            <person name="Khan S."/>
            <person name="Koesema E."/>
            <person name="Ishida J."/>
            <person name="Jiang P.X."/>
            <person name="Jones T."/>
            <person name="Kawai J."/>
            <person name="Kamiya A."/>
            <person name="Meyers C."/>
            <person name="Nakajima M."/>
            <person name="Narusaka M."/>
            <person name="Seki M."/>
            <person name="Sakurai T."/>
            <person name="Satou M."/>
            <person name="Tamse R."/>
            <person name="Vaysberg M."/>
            <person name="Wallender E.K."/>
            <person name="Wong C."/>
            <person name="Yamamura Y."/>
            <person name="Yuan S."/>
            <person name="Shinozaki K."/>
            <person name="Davis R.W."/>
            <person name="Theologis A."/>
            <person name="Ecker J.R."/>
        </authorList>
    </citation>
    <scope>NUCLEOTIDE SEQUENCE [LARGE SCALE MRNA]</scope>
    <source>
        <strain>cv. Columbia</strain>
    </source>
</reference>
<reference key="7">
    <citation type="submission" date="2002-03" db="EMBL/GenBank/DDBJ databases">
        <title>Full-length cDNA from Arabidopsis thaliana.</title>
        <authorList>
            <person name="Brover V.V."/>
            <person name="Troukhan M.E."/>
            <person name="Alexandrov N.A."/>
            <person name="Lu Y.-P."/>
            <person name="Flavell R.B."/>
            <person name="Feldmann K.A."/>
        </authorList>
    </citation>
    <scope>NUCLEOTIDE SEQUENCE [LARGE SCALE MRNA]</scope>
</reference>
<reference key="8">
    <citation type="journal article" date="1993" name="Plant J.">
        <title>An inventory of 1152 expressed sequence tags obtained by partial sequencing of cDNAs from Arabidopsis thaliana.</title>
        <authorList>
            <person name="Hoefte H."/>
            <person name="Desprez T."/>
            <person name="Amselem J."/>
            <person name="Chiapello H."/>
            <person name="Rouze P."/>
            <person name="Caboche M."/>
            <person name="Moisan A."/>
            <person name="Jourjon M.-F."/>
            <person name="Charpenteau J.-L."/>
            <person name="Berthomieu P."/>
            <person name="Guerrier D."/>
            <person name="Giraudat J."/>
            <person name="Quigley F."/>
            <person name="Thomas F."/>
            <person name="Yu D.-Y."/>
            <person name="Mache R."/>
            <person name="Raynal M."/>
            <person name="Cooke R."/>
            <person name="Grellet F."/>
            <person name="Delseny M."/>
            <person name="Parmentier Y."/>
            <person name="de Marcillac G."/>
            <person name="Gigot C."/>
            <person name="Fleck J."/>
            <person name="Philipps G."/>
            <person name="Axelos M."/>
            <person name="Bardet C."/>
            <person name="Tremousaygue D."/>
            <person name="Lescure B."/>
        </authorList>
    </citation>
    <scope>NUCLEOTIDE SEQUENCE [LARGE SCALE MRNA] OF 1-116 AND 243-251</scope>
    <source>
        <strain>cv. Columbia</strain>
        <tissue>Seedling</tissue>
    </source>
</reference>
<reference key="9">
    <citation type="journal article" date="1996" name="Plant J.">
        <title>Further progress towards a catalogue of all Arabidopsis genes: analysis of a set of 5000 non-redundant ESTs.</title>
        <authorList>
            <person name="Cooke R."/>
            <person name="Raynal M."/>
            <person name="Laudie M."/>
            <person name="Grellet F."/>
            <person name="Delseny M."/>
            <person name="Morris P.-C."/>
            <person name="Guerrier D."/>
            <person name="Giraudat J."/>
            <person name="Quigley F."/>
            <person name="Clabault G."/>
            <person name="Li Y.-F."/>
            <person name="Mache R."/>
            <person name="Krivitzky M."/>
            <person name="Gy I.J.-J."/>
            <person name="Kreis M."/>
            <person name="Lecharny A."/>
            <person name="Parmentier Y."/>
            <person name="Marbach J."/>
            <person name="Fleck J."/>
            <person name="Clement B."/>
            <person name="Philipps G."/>
            <person name="Herve C."/>
            <person name="Bardet C."/>
            <person name="Tremousaygue D."/>
            <person name="Lescure B."/>
            <person name="Lacomme C."/>
            <person name="Roby D."/>
            <person name="Jourjon M.-F."/>
            <person name="Chabrier P."/>
            <person name="Charpenteau J.-L."/>
            <person name="Desprez T."/>
            <person name="Amselem J."/>
            <person name="Chiapello H."/>
            <person name="Hoefte H."/>
        </authorList>
    </citation>
    <scope>NUCLEOTIDE SEQUENCE [LARGE SCALE MRNA] OF 96-207</scope>
    <source>
        <strain>cv. Columbia</strain>
        <tissue>Seedling</tissue>
    </source>
</reference>
<reference key="10">
    <citation type="journal article" date="1993" name="EMBO J.">
        <title>The vacuolar membrane protein gamma-TIP creates water specific channels in Xenopus oocytes.</title>
        <authorList>
            <person name="Maurel C."/>
            <person name="Reizer J."/>
            <person name="Schroeder J.I."/>
            <person name="Chrispeels M.J."/>
        </authorList>
    </citation>
    <scope>FUNCTION</scope>
</reference>
<reference key="11">
    <citation type="journal article" date="1996" name="Plant Cell">
        <title>Characterization of a new vacuolar membrane aquaporin sensitive to mercury at a unique site.</title>
        <authorList>
            <person name="Daniels M.J."/>
            <person name="Chaumont F."/>
            <person name="Mirkov T.E."/>
            <person name="Chrispeels M.J."/>
        </authorList>
    </citation>
    <scope>TISSUE SPECIFICITY</scope>
    <scope>MUTAGENESIS OF CYS-118</scope>
</reference>
<reference key="12">
    <citation type="journal article" date="2002" name="Genome Biol.">
        <title>From genome to function: the Arabidopsis aquaporins.</title>
        <authorList>
            <person name="Quigley F."/>
            <person name="Rosenberg J.M."/>
            <person name="Shachar-Hill Y."/>
            <person name="Bohnert H.J."/>
        </authorList>
    </citation>
    <scope>NOMENCLATURE</scope>
</reference>
<reference key="13">
    <citation type="journal article" date="2003" name="Plant Physiol.">
        <title>Urea transport by nitrogen-regulated tonoplast intrinsic proteins in Arabidopsis.</title>
        <authorList>
            <person name="Liu L.-H."/>
            <person name="Ludewig U."/>
            <person name="Gassert B."/>
            <person name="Frommer W.B."/>
            <person name="von Wiren N."/>
        </authorList>
    </citation>
    <scope>FUNCTION</scope>
</reference>
<reference key="14">
    <citation type="journal article" date="2004" name="Plant J.">
        <title>Loss of TIP1;1 aquaporin in Arabidopsis leads to cell and plant death.</title>
        <authorList>
            <person name="Ma S."/>
            <person name="Quist T.M."/>
            <person name="Ulanov A."/>
            <person name="Joly R."/>
            <person name="Bohnert H.J."/>
        </authorList>
    </citation>
    <scope>FUNCTION</scope>
    <scope>DISRUPTION PHENOTYPE</scope>
    <scope>SUBCELLULAR LOCATION</scope>
</reference>
<reference key="15">
    <citation type="journal article" date="2006" name="J. Gen. Virol.">
        <title>Arabidopsis tonoplast proteins TIP1 and TIP2 interact with the cucumber mosaic virus 1a replication protein.</title>
        <authorList>
            <person name="Kim M.J."/>
            <person name="Kim H.R."/>
            <person name="Paek K.-H."/>
        </authorList>
    </citation>
    <scope>INTERACTION WITH CMV PROTEIN 1A</scope>
</reference>
<reference key="16">
    <citation type="journal article" date="2007" name="J. Biol. Chem.">
        <title>Specific aquaporins facilitate the diffusion of hydrogen peroxide across membranes.</title>
        <authorList>
            <person name="Bienert G.P."/>
            <person name="Moeller A.L.B."/>
            <person name="Kristiansen K.A."/>
            <person name="Schulz A."/>
            <person name="Moeller I.M."/>
            <person name="Schjoerring J.K."/>
            <person name="Jahn T.P."/>
        </authorList>
    </citation>
    <scope>FUNCTION</scope>
</reference>
<feature type="chain" id="PRO_0000064008" description="Aquaporin TIP1-1">
    <location>
        <begin position="1"/>
        <end position="251"/>
    </location>
</feature>
<feature type="topological domain" description="Cytoplasmic" evidence="3">
    <location>
        <begin position="1"/>
        <end position="23"/>
    </location>
</feature>
<feature type="transmembrane region" description="Helical; Name=1" evidence="3">
    <location>
        <begin position="24"/>
        <end position="44"/>
    </location>
</feature>
<feature type="topological domain" description="Vacuolar" evidence="3">
    <location>
        <begin position="45"/>
        <end position="56"/>
    </location>
</feature>
<feature type="transmembrane region" description="Helical; Name=2" evidence="3">
    <location>
        <begin position="57"/>
        <end position="77"/>
    </location>
</feature>
<feature type="topological domain" description="Cytoplasmic" evidence="3">
    <location>
        <begin position="78"/>
        <end position="103"/>
    </location>
</feature>
<feature type="transmembrane region" description="Helical; Name=3" evidence="3">
    <location>
        <begin position="104"/>
        <end position="124"/>
    </location>
</feature>
<feature type="topological domain" description="Vacuolar" evidence="3">
    <location>
        <begin position="125"/>
        <end position="143"/>
    </location>
</feature>
<feature type="transmembrane region" description="Helical; Name=4" evidence="3">
    <location>
        <begin position="144"/>
        <end position="164"/>
    </location>
</feature>
<feature type="topological domain" description="Cytoplasmic" evidence="3">
    <location>
        <begin position="165"/>
        <end position="172"/>
    </location>
</feature>
<feature type="transmembrane region" description="Helical; Name=5" evidence="3">
    <location>
        <begin position="173"/>
        <end position="193"/>
    </location>
</feature>
<feature type="topological domain" description="Vacuolar" evidence="3">
    <location>
        <begin position="194"/>
        <end position="218"/>
    </location>
</feature>
<feature type="transmembrane region" description="Helical; Name=6" evidence="3">
    <location>
        <begin position="219"/>
        <end position="239"/>
    </location>
</feature>
<feature type="topological domain" description="Cytoplasmic" evidence="3">
    <location>
        <begin position="240"/>
        <end position="251"/>
    </location>
</feature>
<feature type="short sequence motif" description="NPA 1">
    <location>
        <begin position="85"/>
        <end position="87"/>
    </location>
</feature>
<feature type="short sequence motif" description="NPA 2">
    <location>
        <begin position="199"/>
        <end position="201"/>
    </location>
</feature>
<feature type="modified residue" description="N-acetylmethionine" evidence="2">
    <location>
        <position position="1"/>
    </location>
</feature>
<feature type="mutagenesis site" description="Strongly reduces the mercury-sensitivity." evidence="9">
    <original>C</original>
    <variation>T</variation>
    <location>
        <position position="118"/>
    </location>
</feature>
<feature type="sequence conflict" description="In Ref. 3; CAA51171." evidence="10" ref="3">
    <original>I</original>
    <variation>V</variation>
    <location>
        <position position="8"/>
    </location>
</feature>
<feature type="sequence conflict" description="In Ref. 3; CAA51171 and 7; AAM65100." evidence="10" ref="3 7">
    <original>V</original>
    <variation>L</variation>
    <location>
        <position position="63"/>
    </location>
</feature>
<feature type="sequence conflict" description="In Ref. 9; CAA81194." evidence="10" ref="9">
    <original>G</original>
    <variation>W</variation>
    <location>
        <position position="96"/>
    </location>
</feature>
<feature type="sequence conflict" description="In Ref. 9; CAA81194." evidence="10" ref="9">
    <original>P</original>
    <variation>R</variation>
    <location>
        <position position="131"/>
    </location>
</feature>
<feature type="sequence conflict" description="In Ref. 1; CAA38633 and 9; CAA81194." evidence="10" ref="1 9">
    <original>A</original>
    <variation>P</variation>
    <location>
        <position position="132"/>
    </location>
</feature>
<protein>
    <recommendedName>
        <fullName>Aquaporin TIP1-1</fullName>
    </recommendedName>
    <alternativeName>
        <fullName>Aquaporin TIP</fullName>
    </alternativeName>
    <alternativeName>
        <fullName>Gamma-tonoplast intrinsic protein</fullName>
        <shortName>Gamma-TIP</shortName>
    </alternativeName>
    <alternativeName>
        <fullName>Tonoplast intrinsic protein 1-1</fullName>
        <shortName>AtTIP1;1</shortName>
    </alternativeName>
    <alternativeName>
        <fullName>Tonoplast intrinsic protein, root-specific RB7</fullName>
    </alternativeName>
</protein>
<accession>P25818</accession>
<accession>P21652</accession>
<accession>Q42075</accession>
<accession>Q8L5T8</accession>
<keyword id="KW-0007">Acetylation</keyword>
<keyword id="KW-0472">Membrane</keyword>
<keyword id="KW-1185">Reference proteome</keyword>
<keyword id="KW-0677">Repeat</keyword>
<keyword id="KW-0812">Transmembrane</keyword>
<keyword id="KW-1133">Transmembrane helix</keyword>
<keyword id="KW-0813">Transport</keyword>
<keyword id="KW-0926">Vacuole</keyword>
<comment type="function">
    <text evidence="4 5 7 8">Water channel required to facilitate the transport of water, diffusion of amino acids and/or peptides from the vacuolar compartment to the cytoplasm. Does not promote glycerol permeability. May play a role in the control of cell turgor and cell expansion. Its function is impaired by Hg(2+). May be involved in a vesicle-based metabolite routing through or between pre-vacuolar compartments and the central vacuole. Transports urea in yeast cells in a pH-independent manner. Transports H(2)O(2) in yeast cells.</text>
</comment>
<comment type="subunit">
    <text evidence="6">Interacts with cucumber mosaic virus (CMV) Protein 1a.</text>
</comment>
<comment type="subcellular location">
    <subcellularLocation>
        <location evidence="5">Vacuole membrane</location>
        <topology evidence="5">Multi-pass membrane protein</topology>
    </subcellularLocation>
    <text evidence="1">Tonoplast. Specifically located in the tonoplast of lytic or degradative vacuoles (LV) (By similarity).</text>
</comment>
<comment type="tissue specificity">
    <text evidence="9">In all the vegetative organs, but not in seeds. Preferentially expressed in roots.</text>
</comment>
<comment type="induction">
    <text>By gibberellins.</text>
</comment>
<comment type="domain">
    <text>Aquaporins contain two tandem repeats each containing three membrane-spanning domains and a pore-forming loop with the signature motif Asn-Pro-Ala (NPA).</text>
</comment>
<comment type="disruption phenotype">
    <text evidence="5">Plants display lesion formation or plant death, and low contents of glucose, fructose, inositol, and threonic, succinic, fumaric, and malic acids.</text>
</comment>
<comment type="similarity">
    <text evidence="10">Belongs to the MIP/aquaporin (TC 1.A.8) family. TIP (TC 1.A.8.10) subfamily.</text>
</comment>
<comment type="sequence caution" evidence="10">
    <conflict type="frameshift">
        <sequence resource="EMBL-CDS" id="CAA38633"/>
    </conflict>
</comment>
<dbReference type="EMBL" id="X54854">
    <property type="protein sequence ID" value="CAA38633.1"/>
    <property type="status" value="ALT_FRAME"/>
    <property type="molecule type" value="mRNA"/>
</dbReference>
<dbReference type="EMBL" id="X63552">
    <property type="protein sequence ID" value="CAA45115.1"/>
    <property type="molecule type" value="Genomic_DNA"/>
</dbReference>
<dbReference type="EMBL" id="M84344">
    <property type="protein sequence ID" value="AAA32806.1"/>
    <property type="molecule type" value="Genomic_DNA"/>
</dbReference>
<dbReference type="EMBL" id="X72581">
    <property type="protein sequence ID" value="CAA51171.1"/>
    <property type="molecule type" value="mRNA"/>
</dbReference>
<dbReference type="EMBL" id="AC006922">
    <property type="protein sequence ID" value="AAD31569.1"/>
    <property type="molecule type" value="Genomic_DNA"/>
</dbReference>
<dbReference type="EMBL" id="CP002685">
    <property type="protein sequence ID" value="AEC09303.1"/>
    <property type="molecule type" value="Genomic_DNA"/>
</dbReference>
<dbReference type="EMBL" id="AF370172">
    <property type="protein sequence ID" value="AAK43987.1"/>
    <property type="molecule type" value="mRNA"/>
</dbReference>
<dbReference type="EMBL" id="AY059134">
    <property type="protein sequence ID" value="AAL15240.1"/>
    <property type="molecule type" value="mRNA"/>
</dbReference>
<dbReference type="EMBL" id="AY087558">
    <property type="protein sequence ID" value="AAM65100.1"/>
    <property type="molecule type" value="mRNA"/>
</dbReference>
<dbReference type="EMBL" id="Z18124">
    <property type="protein sequence ID" value="CAA79107.1"/>
    <property type="molecule type" value="mRNA"/>
</dbReference>
<dbReference type="EMBL" id="Z18771">
    <property type="protein sequence ID" value="CAA79247.1"/>
    <property type="molecule type" value="mRNA"/>
</dbReference>
<dbReference type="EMBL" id="Z26215">
    <property type="protein sequence ID" value="CAA81194.1"/>
    <property type="molecule type" value="mRNA"/>
</dbReference>
<dbReference type="PIR" id="S13718">
    <property type="entry name" value="S13718"/>
</dbReference>
<dbReference type="PIR" id="S22202">
    <property type="entry name" value="S22202"/>
</dbReference>
<dbReference type="SMR" id="P25818"/>
<dbReference type="BioGRID" id="3599">
    <property type="interactions" value="12"/>
</dbReference>
<dbReference type="FunCoup" id="P25818">
    <property type="interactions" value="463"/>
</dbReference>
<dbReference type="IntAct" id="P25818">
    <property type="interactions" value="11"/>
</dbReference>
<dbReference type="STRING" id="3702.P25818"/>
<dbReference type="TCDB" id="1.A.8.10.3">
    <property type="family name" value="the major intrinsic protein (mip) family"/>
</dbReference>
<dbReference type="PaxDb" id="3702-AT2G36830.1"/>
<dbReference type="ProteomicsDB" id="234358"/>
<dbReference type="EnsemblPlants" id="AT2G36830.1">
    <property type="protein sequence ID" value="AT2G36830.1"/>
    <property type="gene ID" value="AT2G36830"/>
</dbReference>
<dbReference type="GeneID" id="818255"/>
<dbReference type="Gramene" id="AT2G36830.1">
    <property type="protein sequence ID" value="AT2G36830.1"/>
    <property type="gene ID" value="AT2G36830"/>
</dbReference>
<dbReference type="KEGG" id="ath:AT2G36830"/>
<dbReference type="Araport" id="AT2G36830"/>
<dbReference type="TAIR" id="AT2G36830">
    <property type="gene designation" value="GAMMA-TIP"/>
</dbReference>
<dbReference type="eggNOG" id="KOG0223">
    <property type="taxonomic scope" value="Eukaryota"/>
</dbReference>
<dbReference type="HOGENOM" id="CLU_020019_3_4_1"/>
<dbReference type="InParanoid" id="P25818"/>
<dbReference type="OMA" id="MHYEEAN"/>
<dbReference type="PhylomeDB" id="P25818"/>
<dbReference type="PRO" id="PR:P25818"/>
<dbReference type="Proteomes" id="UP000006548">
    <property type="component" value="Chromosome 2"/>
</dbReference>
<dbReference type="ExpressionAtlas" id="P25818">
    <property type="expression patterns" value="baseline and differential"/>
</dbReference>
<dbReference type="GO" id="GO:0042807">
    <property type="term" value="C:central vacuole"/>
    <property type="evidence" value="ECO:0000314"/>
    <property type="project" value="TAIR"/>
</dbReference>
<dbReference type="GO" id="GO:0009941">
    <property type="term" value="C:chloroplast envelope"/>
    <property type="evidence" value="ECO:0007005"/>
    <property type="project" value="TAIR"/>
</dbReference>
<dbReference type="GO" id="GO:0000325">
    <property type="term" value="C:plant-type vacuole"/>
    <property type="evidence" value="ECO:0007005"/>
    <property type="project" value="TAIR"/>
</dbReference>
<dbReference type="GO" id="GO:0009705">
    <property type="term" value="C:plant-type vacuole membrane"/>
    <property type="evidence" value="ECO:0000314"/>
    <property type="project" value="TAIR"/>
</dbReference>
<dbReference type="GO" id="GO:0000326">
    <property type="term" value="C:protein storage vacuole"/>
    <property type="evidence" value="ECO:0000314"/>
    <property type="project" value="TAIR"/>
</dbReference>
<dbReference type="GO" id="GO:0015204">
    <property type="term" value="F:urea transmembrane transporter activity"/>
    <property type="evidence" value="ECO:0000316"/>
    <property type="project" value="TAIR"/>
</dbReference>
<dbReference type="GO" id="GO:0015250">
    <property type="term" value="F:water channel activity"/>
    <property type="evidence" value="ECO:0000314"/>
    <property type="project" value="TAIR"/>
</dbReference>
<dbReference type="GO" id="GO:0080170">
    <property type="term" value="P:hydrogen peroxide transmembrane transport"/>
    <property type="evidence" value="ECO:0000314"/>
    <property type="project" value="TAIR"/>
</dbReference>
<dbReference type="GO" id="GO:0015840">
    <property type="term" value="P:urea transport"/>
    <property type="evidence" value="ECO:0000316"/>
    <property type="project" value="TAIR"/>
</dbReference>
<dbReference type="GO" id="GO:0006833">
    <property type="term" value="P:water transport"/>
    <property type="evidence" value="ECO:0000314"/>
    <property type="project" value="TAIR"/>
</dbReference>
<dbReference type="CDD" id="cd00333">
    <property type="entry name" value="MIP"/>
    <property type="match status" value="1"/>
</dbReference>
<dbReference type="FunFam" id="1.20.1080.10:FF:000002">
    <property type="entry name" value="Probable aquaporin TIP1-1"/>
    <property type="match status" value="1"/>
</dbReference>
<dbReference type="Gene3D" id="1.20.1080.10">
    <property type="entry name" value="Glycerol uptake facilitator protein"/>
    <property type="match status" value="1"/>
</dbReference>
<dbReference type="InterPro" id="IPR023271">
    <property type="entry name" value="Aquaporin-like"/>
</dbReference>
<dbReference type="InterPro" id="IPR034294">
    <property type="entry name" value="Aquaporin_transptr"/>
</dbReference>
<dbReference type="InterPro" id="IPR000425">
    <property type="entry name" value="MIP"/>
</dbReference>
<dbReference type="InterPro" id="IPR022357">
    <property type="entry name" value="MIP_CS"/>
</dbReference>
<dbReference type="PANTHER" id="PTHR45665:SF54">
    <property type="entry name" value="AQUAPORIN TIP1-1"/>
    <property type="match status" value="1"/>
</dbReference>
<dbReference type="PANTHER" id="PTHR45665">
    <property type="entry name" value="AQUAPORIN-8"/>
    <property type="match status" value="1"/>
</dbReference>
<dbReference type="Pfam" id="PF00230">
    <property type="entry name" value="MIP"/>
    <property type="match status" value="1"/>
</dbReference>
<dbReference type="PRINTS" id="PR00783">
    <property type="entry name" value="MINTRINSICP"/>
</dbReference>
<dbReference type="SUPFAM" id="SSF81338">
    <property type="entry name" value="Aquaporin-like"/>
    <property type="match status" value="1"/>
</dbReference>
<dbReference type="PROSITE" id="PS00221">
    <property type="entry name" value="MIP"/>
    <property type="match status" value="1"/>
</dbReference>
<gene>
    <name type="primary">TIP1-1</name>
    <name type="synonym">AQP.1</name>
    <name type="ordered locus">At2g36830</name>
    <name type="ORF">T1J8.1</name>
</gene>
<proteinExistence type="evidence at protein level"/>